<accession>E7Q5V8</accession>
<gene>
    <name type="primary">YRA2</name>
    <name type="ORF">FOSTERSB_2726</name>
</gene>
<evidence type="ECO:0000250" key="1"/>
<evidence type="ECO:0000250" key="2">
    <source>
        <dbReference type="UniProtKB" id="P36036"/>
    </source>
</evidence>
<evidence type="ECO:0000255" key="3">
    <source>
        <dbReference type="PROSITE-ProRule" id="PRU00176"/>
    </source>
</evidence>
<evidence type="ECO:0000256" key="4">
    <source>
        <dbReference type="SAM" id="MobiDB-lite"/>
    </source>
</evidence>
<evidence type="ECO:0000305" key="5"/>
<proteinExistence type="inferred from homology"/>
<keyword id="KW-0007">Acetylation</keyword>
<keyword id="KW-0238">DNA-binding</keyword>
<keyword id="KW-0509">mRNA transport</keyword>
<keyword id="KW-0539">Nucleus</keyword>
<keyword id="KW-0694">RNA-binding</keyword>
<keyword id="KW-0813">Transport</keyword>
<sequence>MDKAFDEIIGNSHTDSSSNHKVTRYRRRDLRNELGPRLGFAPSDAASRSKDRLYREREEPPLPKRIRISKIPLDVSDYTLDDMIKEFGSPIFSKIFDNKEDRTCIYEFEDPEVLEKIVERYNGHELHNAKIEVEIYQPQRKHSRMNAHNRRKQTAQEHGRGRPGSHYRQKPNRVSKKNKGREKNNTPTSVEALDAELDAYMKG</sequence>
<feature type="chain" id="PRO_0000409548" description="RNA annealing protein YRA2">
    <location>
        <begin position="1"/>
        <end position="203"/>
    </location>
</feature>
<feature type="domain" description="RRM" evidence="3">
    <location>
        <begin position="64"/>
        <end position="138"/>
    </location>
</feature>
<feature type="region of interest" description="Disordered" evidence="4">
    <location>
        <begin position="1"/>
        <end position="60"/>
    </location>
</feature>
<feature type="region of interest" description="Disordered" evidence="4">
    <location>
        <begin position="137"/>
        <end position="203"/>
    </location>
</feature>
<feature type="compositionally biased region" description="Polar residues" evidence="4">
    <location>
        <begin position="11"/>
        <end position="20"/>
    </location>
</feature>
<feature type="compositionally biased region" description="Basic and acidic residues" evidence="4">
    <location>
        <begin position="47"/>
        <end position="60"/>
    </location>
</feature>
<feature type="compositionally biased region" description="Basic residues" evidence="4">
    <location>
        <begin position="139"/>
        <end position="153"/>
    </location>
</feature>
<feature type="compositionally biased region" description="Basic residues" evidence="4">
    <location>
        <begin position="161"/>
        <end position="180"/>
    </location>
</feature>
<feature type="modified residue" description="N-acetylmethionine" evidence="2">
    <location>
        <position position="1"/>
    </location>
</feature>
<comment type="function">
    <text evidence="1">Involved in export of poly(A) mRNAs from the nucleus. Recruited to the coding sequences as well as poly-A sites of active genes (By similarity).</text>
</comment>
<comment type="subunit">
    <text evidence="1">Associates with mRNPs. Interacts with YRA1.</text>
</comment>
<comment type="subcellular location">
    <subcellularLocation>
        <location evidence="1">Nucleus</location>
    </subcellularLocation>
</comment>
<comment type="similarity">
    <text evidence="5">Belongs to the YRA1 family.</text>
</comment>
<protein>
    <recommendedName>
        <fullName>RNA annealing protein YRA2</fullName>
    </recommendedName>
</protein>
<organism>
    <name type="scientific">Saccharomyces cerevisiae (strain FostersB)</name>
    <name type="common">Baker's yeast</name>
    <dbReference type="NCBI Taxonomy" id="764102"/>
    <lineage>
        <taxon>Eukaryota</taxon>
        <taxon>Fungi</taxon>
        <taxon>Dikarya</taxon>
        <taxon>Ascomycota</taxon>
        <taxon>Saccharomycotina</taxon>
        <taxon>Saccharomycetes</taxon>
        <taxon>Saccharomycetales</taxon>
        <taxon>Saccharomycetaceae</taxon>
        <taxon>Saccharomyces</taxon>
    </lineage>
</organism>
<name>YRA2_YEASB</name>
<dbReference type="EMBL" id="AEHH01000044">
    <property type="protein sequence ID" value="EGA57984.1"/>
    <property type="molecule type" value="Genomic_DNA"/>
</dbReference>
<dbReference type="SMR" id="E7Q5V8"/>
<dbReference type="HOGENOM" id="CLU_111217_0_0_1"/>
<dbReference type="OrthoDB" id="1099063at2759"/>
<dbReference type="GO" id="GO:0005634">
    <property type="term" value="C:nucleus"/>
    <property type="evidence" value="ECO:0007669"/>
    <property type="project" value="UniProtKB-SubCell"/>
</dbReference>
<dbReference type="GO" id="GO:0003677">
    <property type="term" value="F:DNA binding"/>
    <property type="evidence" value="ECO:0007669"/>
    <property type="project" value="UniProtKB-KW"/>
</dbReference>
<dbReference type="GO" id="GO:0003723">
    <property type="term" value="F:RNA binding"/>
    <property type="evidence" value="ECO:0007669"/>
    <property type="project" value="UniProtKB-KW"/>
</dbReference>
<dbReference type="GO" id="GO:0051028">
    <property type="term" value="P:mRNA transport"/>
    <property type="evidence" value="ECO:0007669"/>
    <property type="project" value="UniProtKB-KW"/>
</dbReference>
<dbReference type="CDD" id="cd12295">
    <property type="entry name" value="RRM_YRA2"/>
    <property type="match status" value="1"/>
</dbReference>
<dbReference type="FunFam" id="3.30.70.330:FF:000793">
    <property type="entry name" value="RNA annealing protein YRA2"/>
    <property type="match status" value="1"/>
</dbReference>
<dbReference type="Gene3D" id="3.30.70.330">
    <property type="match status" value="1"/>
</dbReference>
<dbReference type="InterPro" id="IPR025715">
    <property type="entry name" value="FoP_C"/>
</dbReference>
<dbReference type="InterPro" id="IPR012677">
    <property type="entry name" value="Nucleotide-bd_a/b_plait_sf"/>
</dbReference>
<dbReference type="InterPro" id="IPR035979">
    <property type="entry name" value="RBD_domain_sf"/>
</dbReference>
<dbReference type="InterPro" id="IPR000504">
    <property type="entry name" value="RRM_dom"/>
</dbReference>
<dbReference type="InterPro" id="IPR034396">
    <property type="entry name" value="Yra2_RRM"/>
</dbReference>
<dbReference type="Pfam" id="PF13865">
    <property type="entry name" value="FoP_duplication"/>
    <property type="match status" value="1"/>
</dbReference>
<dbReference type="Pfam" id="PF00076">
    <property type="entry name" value="RRM_1"/>
    <property type="match status" value="1"/>
</dbReference>
<dbReference type="SMART" id="SM00360">
    <property type="entry name" value="RRM"/>
    <property type="match status" value="1"/>
</dbReference>
<dbReference type="SUPFAM" id="SSF54928">
    <property type="entry name" value="RNA-binding domain, RBD"/>
    <property type="match status" value="1"/>
</dbReference>
<dbReference type="PROSITE" id="PS50102">
    <property type="entry name" value="RRM"/>
    <property type="match status" value="1"/>
</dbReference>
<reference key="1">
    <citation type="journal article" date="2011" name="PLoS Genet.">
        <title>Whole-genome comparison reveals novel genetic elements that characterize the genome of industrial strains of Saccharomyces cerevisiae.</title>
        <authorList>
            <person name="Borneman A.R."/>
            <person name="Desany B.A."/>
            <person name="Riches D."/>
            <person name="Affourtit J.P."/>
            <person name="Forgan A.H."/>
            <person name="Pretorius I.S."/>
            <person name="Egholm M."/>
            <person name="Chambers P.J."/>
        </authorList>
    </citation>
    <scope>NUCLEOTIDE SEQUENCE [LARGE SCALE GENOMIC DNA]</scope>
    <source>
        <strain>FostersB</strain>
    </source>
</reference>